<dbReference type="EMBL" id="CP000270">
    <property type="protein sequence ID" value="ABE32622.1"/>
    <property type="molecule type" value="Genomic_DNA"/>
</dbReference>
<dbReference type="RefSeq" id="WP_011490056.1">
    <property type="nucleotide sequence ID" value="NC_007951.1"/>
</dbReference>
<dbReference type="SMR" id="Q13TG7"/>
<dbReference type="STRING" id="266265.Bxe_A0311"/>
<dbReference type="KEGG" id="bxb:DR64_2481"/>
<dbReference type="KEGG" id="bxe:Bxe_A0311"/>
<dbReference type="PATRIC" id="fig|266265.5.peg.4315"/>
<dbReference type="eggNOG" id="COG0480">
    <property type="taxonomic scope" value="Bacteria"/>
</dbReference>
<dbReference type="OrthoDB" id="9804431at2"/>
<dbReference type="Proteomes" id="UP000001817">
    <property type="component" value="Chromosome 1"/>
</dbReference>
<dbReference type="GO" id="GO:0005737">
    <property type="term" value="C:cytoplasm"/>
    <property type="evidence" value="ECO:0007669"/>
    <property type="project" value="UniProtKB-SubCell"/>
</dbReference>
<dbReference type="GO" id="GO:0005525">
    <property type="term" value="F:GTP binding"/>
    <property type="evidence" value="ECO:0007669"/>
    <property type="project" value="UniProtKB-UniRule"/>
</dbReference>
<dbReference type="GO" id="GO:0003924">
    <property type="term" value="F:GTPase activity"/>
    <property type="evidence" value="ECO:0007669"/>
    <property type="project" value="InterPro"/>
</dbReference>
<dbReference type="GO" id="GO:0097216">
    <property type="term" value="F:guanosine tetraphosphate binding"/>
    <property type="evidence" value="ECO:0007669"/>
    <property type="project" value="UniProtKB-ARBA"/>
</dbReference>
<dbReference type="GO" id="GO:0003746">
    <property type="term" value="F:translation elongation factor activity"/>
    <property type="evidence" value="ECO:0007669"/>
    <property type="project" value="UniProtKB-UniRule"/>
</dbReference>
<dbReference type="GO" id="GO:0032790">
    <property type="term" value="P:ribosome disassembly"/>
    <property type="evidence" value="ECO:0007669"/>
    <property type="project" value="TreeGrafter"/>
</dbReference>
<dbReference type="CDD" id="cd01886">
    <property type="entry name" value="EF-G"/>
    <property type="match status" value="1"/>
</dbReference>
<dbReference type="CDD" id="cd16262">
    <property type="entry name" value="EFG_III"/>
    <property type="match status" value="1"/>
</dbReference>
<dbReference type="CDD" id="cd01434">
    <property type="entry name" value="EFG_mtEFG1_IV"/>
    <property type="match status" value="1"/>
</dbReference>
<dbReference type="CDD" id="cd03713">
    <property type="entry name" value="EFG_mtEFG_C"/>
    <property type="match status" value="1"/>
</dbReference>
<dbReference type="CDD" id="cd04088">
    <property type="entry name" value="EFG_mtEFG_II"/>
    <property type="match status" value="1"/>
</dbReference>
<dbReference type="FunFam" id="2.40.30.10:FF:000006">
    <property type="entry name" value="Elongation factor G"/>
    <property type="match status" value="1"/>
</dbReference>
<dbReference type="FunFam" id="3.30.230.10:FF:000003">
    <property type="entry name" value="Elongation factor G"/>
    <property type="match status" value="1"/>
</dbReference>
<dbReference type="FunFam" id="3.30.70.240:FF:000001">
    <property type="entry name" value="Elongation factor G"/>
    <property type="match status" value="1"/>
</dbReference>
<dbReference type="FunFam" id="3.30.70.870:FF:000001">
    <property type="entry name" value="Elongation factor G"/>
    <property type="match status" value="1"/>
</dbReference>
<dbReference type="FunFam" id="3.40.50.300:FF:000029">
    <property type="entry name" value="Elongation factor G"/>
    <property type="match status" value="1"/>
</dbReference>
<dbReference type="Gene3D" id="3.30.230.10">
    <property type="match status" value="1"/>
</dbReference>
<dbReference type="Gene3D" id="3.30.70.240">
    <property type="match status" value="1"/>
</dbReference>
<dbReference type="Gene3D" id="3.30.70.870">
    <property type="entry name" value="Elongation Factor G (Translational Gtpase), domain 3"/>
    <property type="match status" value="1"/>
</dbReference>
<dbReference type="Gene3D" id="3.40.50.300">
    <property type="entry name" value="P-loop containing nucleotide triphosphate hydrolases"/>
    <property type="match status" value="1"/>
</dbReference>
<dbReference type="Gene3D" id="2.40.30.10">
    <property type="entry name" value="Translation factors"/>
    <property type="match status" value="1"/>
</dbReference>
<dbReference type="HAMAP" id="MF_00054_B">
    <property type="entry name" value="EF_G_EF_2_B"/>
    <property type="match status" value="1"/>
</dbReference>
<dbReference type="InterPro" id="IPR041095">
    <property type="entry name" value="EFG_II"/>
</dbReference>
<dbReference type="InterPro" id="IPR009022">
    <property type="entry name" value="EFG_III"/>
</dbReference>
<dbReference type="InterPro" id="IPR035647">
    <property type="entry name" value="EFG_III/V"/>
</dbReference>
<dbReference type="InterPro" id="IPR047872">
    <property type="entry name" value="EFG_IV"/>
</dbReference>
<dbReference type="InterPro" id="IPR035649">
    <property type="entry name" value="EFG_V"/>
</dbReference>
<dbReference type="InterPro" id="IPR000640">
    <property type="entry name" value="EFG_V-like"/>
</dbReference>
<dbReference type="InterPro" id="IPR004161">
    <property type="entry name" value="EFTu-like_2"/>
</dbReference>
<dbReference type="InterPro" id="IPR031157">
    <property type="entry name" value="G_TR_CS"/>
</dbReference>
<dbReference type="InterPro" id="IPR027417">
    <property type="entry name" value="P-loop_NTPase"/>
</dbReference>
<dbReference type="InterPro" id="IPR020568">
    <property type="entry name" value="Ribosomal_Su5_D2-typ_SF"/>
</dbReference>
<dbReference type="InterPro" id="IPR014721">
    <property type="entry name" value="Ribsml_uS5_D2-typ_fold_subgr"/>
</dbReference>
<dbReference type="InterPro" id="IPR005225">
    <property type="entry name" value="Small_GTP-bd"/>
</dbReference>
<dbReference type="InterPro" id="IPR000795">
    <property type="entry name" value="T_Tr_GTP-bd_dom"/>
</dbReference>
<dbReference type="InterPro" id="IPR009000">
    <property type="entry name" value="Transl_B-barrel_sf"/>
</dbReference>
<dbReference type="InterPro" id="IPR004540">
    <property type="entry name" value="Transl_elong_EFG/EF2"/>
</dbReference>
<dbReference type="InterPro" id="IPR005517">
    <property type="entry name" value="Transl_elong_EFG/EF2_IV"/>
</dbReference>
<dbReference type="NCBIfam" id="TIGR00484">
    <property type="entry name" value="EF-G"/>
    <property type="match status" value="1"/>
</dbReference>
<dbReference type="NCBIfam" id="NF009381">
    <property type="entry name" value="PRK12740.1-5"/>
    <property type="match status" value="1"/>
</dbReference>
<dbReference type="NCBIfam" id="TIGR00231">
    <property type="entry name" value="small_GTP"/>
    <property type="match status" value="1"/>
</dbReference>
<dbReference type="PANTHER" id="PTHR43261:SF1">
    <property type="entry name" value="RIBOSOME-RELEASING FACTOR 2, MITOCHONDRIAL"/>
    <property type="match status" value="1"/>
</dbReference>
<dbReference type="PANTHER" id="PTHR43261">
    <property type="entry name" value="TRANSLATION ELONGATION FACTOR G-RELATED"/>
    <property type="match status" value="1"/>
</dbReference>
<dbReference type="Pfam" id="PF00679">
    <property type="entry name" value="EFG_C"/>
    <property type="match status" value="1"/>
</dbReference>
<dbReference type="Pfam" id="PF14492">
    <property type="entry name" value="EFG_III"/>
    <property type="match status" value="1"/>
</dbReference>
<dbReference type="Pfam" id="PF03764">
    <property type="entry name" value="EFG_IV"/>
    <property type="match status" value="1"/>
</dbReference>
<dbReference type="Pfam" id="PF00009">
    <property type="entry name" value="GTP_EFTU"/>
    <property type="match status" value="1"/>
</dbReference>
<dbReference type="Pfam" id="PF03144">
    <property type="entry name" value="GTP_EFTU_D2"/>
    <property type="match status" value="1"/>
</dbReference>
<dbReference type="PRINTS" id="PR00315">
    <property type="entry name" value="ELONGATNFCT"/>
</dbReference>
<dbReference type="SMART" id="SM00838">
    <property type="entry name" value="EFG_C"/>
    <property type="match status" value="1"/>
</dbReference>
<dbReference type="SMART" id="SM00889">
    <property type="entry name" value="EFG_IV"/>
    <property type="match status" value="1"/>
</dbReference>
<dbReference type="SUPFAM" id="SSF54980">
    <property type="entry name" value="EF-G C-terminal domain-like"/>
    <property type="match status" value="2"/>
</dbReference>
<dbReference type="SUPFAM" id="SSF52540">
    <property type="entry name" value="P-loop containing nucleoside triphosphate hydrolases"/>
    <property type="match status" value="1"/>
</dbReference>
<dbReference type="SUPFAM" id="SSF54211">
    <property type="entry name" value="Ribosomal protein S5 domain 2-like"/>
    <property type="match status" value="1"/>
</dbReference>
<dbReference type="SUPFAM" id="SSF50447">
    <property type="entry name" value="Translation proteins"/>
    <property type="match status" value="1"/>
</dbReference>
<dbReference type="PROSITE" id="PS00301">
    <property type="entry name" value="G_TR_1"/>
    <property type="match status" value="1"/>
</dbReference>
<dbReference type="PROSITE" id="PS51722">
    <property type="entry name" value="G_TR_2"/>
    <property type="match status" value="1"/>
</dbReference>
<name>EFG2_PARXL</name>
<feature type="chain" id="PRO_0000263438" description="Elongation factor G 2">
    <location>
        <begin position="1"/>
        <end position="700"/>
    </location>
</feature>
<feature type="domain" description="tr-type G">
    <location>
        <begin position="8"/>
        <end position="290"/>
    </location>
</feature>
<feature type="binding site" evidence="1">
    <location>
        <begin position="17"/>
        <end position="24"/>
    </location>
    <ligand>
        <name>GTP</name>
        <dbReference type="ChEBI" id="CHEBI:37565"/>
    </ligand>
</feature>
<feature type="binding site" evidence="1">
    <location>
        <begin position="88"/>
        <end position="92"/>
    </location>
    <ligand>
        <name>GTP</name>
        <dbReference type="ChEBI" id="CHEBI:37565"/>
    </ligand>
</feature>
<feature type="binding site" evidence="1">
    <location>
        <begin position="142"/>
        <end position="145"/>
    </location>
    <ligand>
        <name>GTP</name>
        <dbReference type="ChEBI" id="CHEBI:37565"/>
    </ligand>
</feature>
<accession>Q13TG7</accession>
<evidence type="ECO:0000255" key="1">
    <source>
        <dbReference type="HAMAP-Rule" id="MF_00054"/>
    </source>
</evidence>
<gene>
    <name evidence="1" type="primary">fusA2</name>
    <name type="ordered locus">Bxeno_A4084</name>
    <name type="ORF">Bxe_A0311</name>
</gene>
<organism>
    <name type="scientific">Paraburkholderia xenovorans (strain LB400)</name>
    <dbReference type="NCBI Taxonomy" id="266265"/>
    <lineage>
        <taxon>Bacteria</taxon>
        <taxon>Pseudomonadati</taxon>
        <taxon>Pseudomonadota</taxon>
        <taxon>Betaproteobacteria</taxon>
        <taxon>Burkholderiales</taxon>
        <taxon>Burkholderiaceae</taxon>
        <taxon>Paraburkholderia</taxon>
    </lineage>
</organism>
<protein>
    <recommendedName>
        <fullName evidence="1">Elongation factor G 2</fullName>
        <shortName evidence="1">EF-G 2</shortName>
    </recommendedName>
</protein>
<keyword id="KW-0963">Cytoplasm</keyword>
<keyword id="KW-0251">Elongation factor</keyword>
<keyword id="KW-0342">GTP-binding</keyword>
<keyword id="KW-0547">Nucleotide-binding</keyword>
<keyword id="KW-0648">Protein biosynthesis</keyword>
<keyword id="KW-1185">Reference proteome</keyword>
<sequence length="700" mass="77557">MARKTPIERYRNIGISAHIDAGKTTTTERILFYTGVNHKIGEVHDGAATMDWMEQEQERGITITSAATTAFWKGMAGDRAEHRINIIDTPGHVDFTIEVERSMRVLDGACMVYCAVGGVQPQSETVWRQANKYKVPRLAFINKMDRTGANFFKVYDQLKLRLKANPVPVVVPIGAEENFTGVVDLLKMKAIIWDEASQGTKFSYEEIPAELVDSCNEWREKMVEAAAESSEDLMNKYLEEGELTEAEIVKGLRDRTIACEIQPMLCGTAFKNKGVQRMLDAVLDFLPSPIDIPPVTGELENGEKGERRAADDEKFSALAFKIMTDPFVGQLIFFRVYSGVVNSGDTVLNATKDKKERLGRILQMHANQREEIKEVRAGDIAAAVGLKDATTGDTLCDPQSPIVLERMIFPEPVISQAVEPKTKPDQEKMGLALNRLAQEDPSFRVQTDEESGQTIISGMGELHLEILVDRMKREFGVEATVGKPQVAYRETIRGKAEDVDGKFVKQSGGRGQYGHAVITLEPNEQGKGYEFLDEIKGGVIPREYIPAVDKGIQETLKAGVLAGFPVVDVKVHLTFGSYHDVDSNENAFRMAGSMAFKEAMRKAQPVILEPMMAVEVETPEDYMGNVMGDLSGRRGIVQGMDDMVGGGKIVRAEVPLSEMFGYSTSLRSLTQGRATYTMEFKHYSEAPRNVSEAIINAKSK</sequence>
<proteinExistence type="inferred from homology"/>
<comment type="function">
    <text evidence="1">Catalyzes the GTP-dependent ribosomal translocation step during translation elongation. During this step, the ribosome changes from the pre-translocational (PRE) to the post-translocational (POST) state as the newly formed A-site-bound peptidyl-tRNA and P-site-bound deacylated tRNA move to the P and E sites, respectively. Catalyzes the coordinated movement of the two tRNA molecules, the mRNA and conformational changes in the ribosome.</text>
</comment>
<comment type="subcellular location">
    <subcellularLocation>
        <location evidence="1">Cytoplasm</location>
    </subcellularLocation>
</comment>
<comment type="similarity">
    <text evidence="1">Belongs to the TRAFAC class translation factor GTPase superfamily. Classic translation factor GTPase family. EF-G/EF-2 subfamily.</text>
</comment>
<reference key="1">
    <citation type="journal article" date="2006" name="Proc. Natl. Acad. Sci. U.S.A.">
        <title>Burkholderia xenovorans LB400 harbors a multi-replicon, 9.73-Mbp genome shaped for versatility.</title>
        <authorList>
            <person name="Chain P.S.G."/>
            <person name="Denef V.J."/>
            <person name="Konstantinidis K.T."/>
            <person name="Vergez L.M."/>
            <person name="Agullo L."/>
            <person name="Reyes V.L."/>
            <person name="Hauser L."/>
            <person name="Cordova M."/>
            <person name="Gomez L."/>
            <person name="Gonzalez M."/>
            <person name="Land M."/>
            <person name="Lao V."/>
            <person name="Larimer F."/>
            <person name="LiPuma J.J."/>
            <person name="Mahenthiralingam E."/>
            <person name="Malfatti S.A."/>
            <person name="Marx C.J."/>
            <person name="Parnell J.J."/>
            <person name="Ramette A."/>
            <person name="Richardson P."/>
            <person name="Seeger M."/>
            <person name="Smith D."/>
            <person name="Spilker T."/>
            <person name="Sul W.J."/>
            <person name="Tsoi T.V."/>
            <person name="Ulrich L.E."/>
            <person name="Zhulin I.B."/>
            <person name="Tiedje J.M."/>
        </authorList>
    </citation>
    <scope>NUCLEOTIDE SEQUENCE [LARGE SCALE GENOMIC DNA]</scope>
    <source>
        <strain>LB400</strain>
    </source>
</reference>